<proteinExistence type="evidence at protein level"/>
<protein>
    <recommendedName>
        <fullName evidence="6">O-glucose prenyltransferase PaPT</fullName>
        <ecNumber evidence="4">2.5.1.-</ecNumber>
    </recommendedName>
    <alternativeName>
        <fullName evidence="6">Fusicoccin A biosynthetic gene clusters protein 11</fullName>
    </alternativeName>
</protein>
<accession>H7CE84</accession>
<organism>
    <name type="scientific">Phomopsis amygdali</name>
    <name type="common">Fusicoccum amygdali</name>
    <dbReference type="NCBI Taxonomy" id="1214568"/>
    <lineage>
        <taxon>Eukaryota</taxon>
        <taxon>Fungi</taxon>
        <taxon>Dikarya</taxon>
        <taxon>Ascomycota</taxon>
        <taxon>Pezizomycotina</taxon>
        <taxon>Sordariomycetes</taxon>
        <taxon>Sordariomycetidae</taxon>
        <taxon>Diaporthales</taxon>
        <taxon>Diaporthaceae</taxon>
        <taxon>Diaporthe</taxon>
    </lineage>
</organism>
<reference key="1">
    <citation type="journal article" date="2012" name="PLoS ONE">
        <title>Molecular breeding of a fungus producing a precursor diterpene suitable for semi-synthesis by dissection of the biosynthetic machinery.</title>
        <authorList>
            <person name="Noike M."/>
            <person name="Ono Y."/>
            <person name="Araki Y."/>
            <person name="Tanio R."/>
            <person name="Higuchi Y."/>
            <person name="Nitta H."/>
            <person name="Hamano Y."/>
            <person name="Toyomasu T."/>
            <person name="Sassa T."/>
            <person name="Kato N."/>
            <person name="Dairi T."/>
        </authorList>
    </citation>
    <scope>NUCLEOTIDE SEQUENCE [MRNA]</scope>
    <scope>FUNCTION</scope>
    <scope>PATHWAY</scope>
</reference>
<reference key="2">
    <citation type="journal article" date="2007" name="Proc. Natl. Acad. Sci. U.S.A.">
        <title>Fusicoccins are biosynthesized by an unusual chimera diterpene synthase in fungi.</title>
        <authorList>
            <person name="Toyomasu T."/>
            <person name="Tsukahara M."/>
            <person name="Kaneko A."/>
            <person name="Niida R."/>
            <person name="Mitsuhashi W."/>
            <person name="Dairi T."/>
            <person name="Kato N."/>
            <person name="Sassa T."/>
        </authorList>
    </citation>
    <scope>FUNCTION</scope>
</reference>
<reference key="3">
    <citation type="journal article" date="2011" name="J. Am. Chem. Soc.">
        <title>Dioxygenases, key enzymes to determine the aglycon structures of fusicoccin and brassicicene, diterpene compounds produced by fungi.</title>
        <authorList>
            <person name="Ono Y."/>
            <person name="Minami A."/>
            <person name="Noike M."/>
            <person name="Higuchi Y."/>
            <person name="Toyomasu T."/>
            <person name="Sassa T."/>
            <person name="Kato N."/>
            <person name="Dairi T."/>
        </authorList>
    </citation>
    <scope>FUNCTION</scope>
</reference>
<reference key="4">
    <citation type="journal article" date="2012" name="ChemBioChem">
        <title>An enzyme catalyzing O-prenylation of the glucose moiety of fusicoccin A, a diterpene glucoside produced by the fungus Phomopsis amygdali.</title>
        <authorList>
            <person name="Noike M."/>
            <person name="Liu C."/>
            <person name="Ono Y."/>
            <person name="Hamano Y."/>
            <person name="Toyomasu T."/>
            <person name="Sassa T."/>
            <person name="Kato N."/>
            <person name="Dairi T."/>
        </authorList>
    </citation>
    <scope>FUNCTION</scope>
    <scope>CATALYTIC ACTIVITY</scope>
    <scope>BIOPHYSICOCHEMICAL PROPERTIES</scope>
    <scope>PATHWAY</scope>
</reference>
<evidence type="ECO:0000250" key="1">
    <source>
        <dbReference type="UniProtKB" id="Q50EL0"/>
    </source>
</evidence>
<evidence type="ECO:0000269" key="2">
    <source>
    </source>
</evidence>
<evidence type="ECO:0000269" key="3">
    <source>
    </source>
</evidence>
<evidence type="ECO:0000269" key="4">
    <source>
    </source>
</evidence>
<evidence type="ECO:0000269" key="5">
    <source>
    </source>
</evidence>
<evidence type="ECO:0000303" key="6">
    <source>
    </source>
</evidence>
<evidence type="ECO:0000305" key="7"/>
<comment type="function">
    <text evidence="2 3 4 5">O-glucose prenyltransferase; part of the 2 gene clusters that mediate the biosynthesis of fusicoccins, diterpene glucosides that display phytohormone-like activity and function as potent activators of plasma membrane H(+)-ATPases in plants by modifying 14-3-3 proteins and cause the plant disease constriction canker (PubMed:22287087, PubMed:22870285). The first step in the pathway is performed by the fusicoccadiene synthase PaFS that possesses both prenyl transferase and terpene cyclase activity, converting isopentenyl diphosphate and dimethylallyl diphosphate into geranylgeranyl diphosphate (GGDP) and successively converting GGDP into fusicocca-2,10(14)-diene, a precursor for fusicoccin H (PubMed:17360612). The second step is the oxidation at the C-8 position by the cytochrome P450 monooxygenase PaP450-2 to yield fusicocca-2,10(14)-diene-8-beta-ol (PubMed:22870285). The cytochrome P450 monooxygenase PaP450-1 then catalyzes the hydroxylation at the C-16 position to produce fusicocca-2,10(14)-diene-8-beta,16-diol (PubMed:22870285). The dioxygenase fc-dox then catalyzes the 16-oxydation of fusicocca-2,10(14)-diene-8-beta,16-diol to yield an aldehyde (8-beta-hydroxyfusicocca-1,10(14)-dien-16-al) (PubMed:21299202, PubMed:22870285). The short-chain dehydrogenase/reductase fc-sdr catalyzes the reduction of the aldehyde to yield fusicocca-1,10(14)-diene-8-beta,16-diol (PubMed:21299202, PubMed:22870285). The next step is the hydroxylation at C-9 performed by the cytochrome P450 monooxygenase PaP450-3 that leads to fusicoccin H aglycon which is glycosylated to fusicoccin H by the O-glycosyltransferase PaGT (PubMed:22870285). Hydroxylation at C-12 by the cytochrome P450 monooxygenase PaP450-4 leads then to the production of fusicoccin Q and is followed by methylation by the O-methyltransferase PaMT to yield fusicoccin P (PubMed:22870285). Fusicoccin P is further converted to fusicoccin J via prenylation by the O-glucose prenyltransferase PaPT (PubMed:22287087). Cytochrome P450 monooxygenase PaP450-5 then performs hydroxylation at C-19 to yield dideacetyl-fusicoccin A which is acetylated to 3'-O-deacetyl-fusicoccin A by the O-acetyltransferase PaAT-2 (PubMed:22870285). Finally, a another acetylation by the O-acetyltransferase PaAT-1 yields fusicoccin A (PubMed:22870285).</text>
</comment>
<comment type="biophysicochemical properties">
    <kinetics>
        <KM evidence="4">0.49 uM for fusicoccin P</KM>
        <KM evidence="4">32.6 uM for fusicoccin H</KM>
        <KM evidence="4">8.3 uM for dimethylallyl diphosphate (with fusicoccin P)</KM>
        <KM evidence="4">35.96 uM for dimethylallyl diphosphate (with fusicoccin H)</KM>
    </kinetics>
    <phDependence>
        <text evidence="4">Optimum pH is 8.0.</text>
    </phDependence>
    <temperatureDependence>
        <text evidence="4">Optimum temperature is 50 degrees Celsius.</text>
    </temperatureDependence>
</comment>
<comment type="pathway">
    <text evidence="4 5">Mycotoxin biosynthesis.</text>
</comment>
<comment type="similarity">
    <text evidence="7">Belongs to the tryptophan dimethylallyltransferase family.</text>
</comment>
<sequence length="453" mass="50745">MANVVLDGSAAPAKAGLPLDLSSPSKQTNFPTELESNSNADFWWRLCRPEMAGLFKQAGGYTELQQESHLRFVREHCAPWMGTVPTGHMANEAVAPVEMSVNYISSRDEGVLRFQMEPFTAVSGPHTQADDPSGKKAVCSMLRSFQHALGDVDLTWTWQLVDKFMVTAPDEVARLREAERTSLPPPLDLYQRTPQFNFAFDLSPDKKSMKTYFLPLAKSLVTGSSALDYCLDAVRSLEPHGEGLSPVADLLHQFFNTSCPGHMSCDYLGIDSTNPKRSRVKLYVSSQQHNSFNFIRAVFTLGGIAKDEATLRGLEFLRSIWHLLVNVDEGELPDSSDRPAKQLPFFLGCLYFSFEWRAGDRLPLVKLYVPQWQYAQSDRKIAKNISASLRKLGRDEAADEYLTHIKQTFPRADLDGNVSIHNQVSYAYSAETGAYLTIYYSVNSKAVARDQIY</sequence>
<gene>
    <name evidence="6" type="primary">PaPT</name>
    <name evidence="6" type="synonym">orf11</name>
</gene>
<keyword id="KW-0808">Transferase</keyword>
<name>FC11_PHOAM</name>
<dbReference type="EC" id="2.5.1.-" evidence="4"/>
<dbReference type="EMBL" id="AB669436">
    <property type="protein sequence ID" value="BAL68129.1"/>
    <property type="molecule type" value="mRNA"/>
</dbReference>
<dbReference type="SMR" id="H7CE84"/>
<dbReference type="BioCyc" id="MetaCyc:MONOMER-18714"/>
<dbReference type="GO" id="GO:0016765">
    <property type="term" value="F:transferase activity, transferring alkyl or aryl (other than methyl) groups"/>
    <property type="evidence" value="ECO:0007669"/>
    <property type="project" value="InterPro"/>
</dbReference>
<dbReference type="GO" id="GO:0009820">
    <property type="term" value="P:alkaloid metabolic process"/>
    <property type="evidence" value="ECO:0007669"/>
    <property type="project" value="InterPro"/>
</dbReference>
<dbReference type="CDD" id="cd13929">
    <property type="entry name" value="PT-DMATS_CymD"/>
    <property type="match status" value="1"/>
</dbReference>
<dbReference type="InterPro" id="IPR033964">
    <property type="entry name" value="Aro_prenylTrfase"/>
</dbReference>
<dbReference type="InterPro" id="IPR017795">
    <property type="entry name" value="Aro_prenylTrfase_DMATS"/>
</dbReference>
<dbReference type="NCBIfam" id="TIGR03429">
    <property type="entry name" value="arom_pren_DMATS"/>
    <property type="match status" value="1"/>
</dbReference>
<dbReference type="PANTHER" id="PTHR40627:SF5">
    <property type="entry name" value="INDOLE PRENYLTRANSFERASE TDIB"/>
    <property type="match status" value="1"/>
</dbReference>
<dbReference type="PANTHER" id="PTHR40627">
    <property type="entry name" value="INDOLE PRENYLTRANSFERASE TDIB-RELATED"/>
    <property type="match status" value="1"/>
</dbReference>
<dbReference type="Pfam" id="PF11991">
    <property type="entry name" value="Trp_DMAT"/>
    <property type="match status" value="1"/>
</dbReference>
<dbReference type="SFLD" id="SFLDS00036">
    <property type="entry name" value="Aromatic_Prenyltransferase"/>
    <property type="match status" value="1"/>
</dbReference>
<dbReference type="SFLD" id="SFLDG01162">
    <property type="entry name" value="I"/>
    <property type="match status" value="1"/>
</dbReference>
<feature type="chain" id="PRO_0000445463" description="O-glucose prenyltransferase PaPT">
    <location>
        <begin position="1"/>
        <end position="453"/>
    </location>
</feature>
<feature type="binding site" evidence="1">
    <location>
        <begin position="95"/>
        <end position="96"/>
    </location>
    <ligand>
        <name>L-tryptophan</name>
        <dbReference type="ChEBI" id="CHEBI:57912"/>
    </ligand>
</feature>
<feature type="binding site" evidence="1">
    <location>
        <position position="210"/>
    </location>
    <ligand>
        <name>substrate</name>
    </ligand>
</feature>
<feature type="binding site" evidence="1">
    <location>
        <position position="212"/>
    </location>
    <ligand>
        <name>substrate</name>
    </ligand>
</feature>
<feature type="binding site" evidence="1">
    <location>
        <position position="279"/>
    </location>
    <ligand>
        <name>substrate</name>
    </ligand>
</feature>
<feature type="binding site" evidence="1">
    <location>
        <position position="281"/>
    </location>
    <ligand>
        <name>substrate</name>
    </ligand>
</feature>
<feature type="binding site" evidence="1">
    <location>
        <position position="283"/>
    </location>
    <ligand>
        <name>substrate</name>
    </ligand>
</feature>
<feature type="binding site" evidence="1">
    <location>
        <position position="368"/>
    </location>
    <ligand>
        <name>substrate</name>
    </ligand>
</feature>
<feature type="binding site" evidence="1">
    <location>
        <position position="435"/>
    </location>
    <ligand>
        <name>substrate</name>
    </ligand>
</feature>